<proteinExistence type="inferred from homology"/>
<comment type="function">
    <text evidence="1">RNaseP catalyzes the removal of the 5'-leader sequence from pre-tRNA to produce the mature 5'-terminus. It can also cleave other RNA substrates such as 4.5S RNA. The protein component plays an auxiliary but essential role in vivo by binding to the 5'-leader sequence and broadening the substrate specificity of the ribozyme.</text>
</comment>
<comment type="catalytic activity">
    <reaction evidence="1">
        <text>Endonucleolytic cleavage of RNA, removing 5'-extranucleotides from tRNA precursor.</text>
        <dbReference type="EC" id="3.1.26.5"/>
    </reaction>
</comment>
<comment type="subunit">
    <text evidence="1">Consists of a catalytic RNA component (M1 or rnpB) and a protein subunit.</text>
</comment>
<comment type="similarity">
    <text evidence="1">Belongs to the RnpA family.</text>
</comment>
<accession>B5RLZ8</accession>
<name>RNPA_BORDL</name>
<organism>
    <name type="scientific">Borrelia duttonii (strain Ly)</name>
    <dbReference type="NCBI Taxonomy" id="412419"/>
    <lineage>
        <taxon>Bacteria</taxon>
        <taxon>Pseudomonadati</taxon>
        <taxon>Spirochaetota</taxon>
        <taxon>Spirochaetia</taxon>
        <taxon>Spirochaetales</taxon>
        <taxon>Borreliaceae</taxon>
        <taxon>Borrelia</taxon>
    </lineage>
</organism>
<feature type="chain" id="PRO_1000194613" description="Ribonuclease P protein component">
    <location>
        <begin position="1"/>
        <end position="114"/>
    </location>
</feature>
<keyword id="KW-0255">Endonuclease</keyword>
<keyword id="KW-0378">Hydrolase</keyword>
<keyword id="KW-0540">Nuclease</keyword>
<keyword id="KW-0694">RNA-binding</keyword>
<keyword id="KW-0819">tRNA processing</keyword>
<gene>
    <name evidence="1" type="primary">rnpA</name>
    <name type="ordered locus">BDU_439</name>
</gene>
<evidence type="ECO:0000255" key="1">
    <source>
        <dbReference type="HAMAP-Rule" id="MF_00227"/>
    </source>
</evidence>
<protein>
    <recommendedName>
        <fullName evidence="1">Ribonuclease P protein component</fullName>
        <shortName evidence="1">RNase P protein</shortName>
        <shortName evidence="1">RNaseP protein</shortName>
        <ecNumber evidence="1">3.1.26.5</ecNumber>
    </recommendedName>
    <alternativeName>
        <fullName evidence="1">Protein C5</fullName>
    </alternativeName>
</protein>
<reference key="1">
    <citation type="journal article" date="2008" name="PLoS Genet.">
        <title>The genome of Borrelia recurrentis, the agent of deadly louse-borne relapsing fever, is a degraded subset of tick-borne Borrelia duttonii.</title>
        <authorList>
            <person name="Lescot M."/>
            <person name="Audic S."/>
            <person name="Robert C."/>
            <person name="Nguyen T.T."/>
            <person name="Blanc G."/>
            <person name="Cutler S.J."/>
            <person name="Wincker P."/>
            <person name="Couloux A."/>
            <person name="Claverie J.-M."/>
            <person name="Raoult D."/>
            <person name="Drancourt M."/>
        </authorList>
    </citation>
    <scope>NUCLEOTIDE SEQUENCE [LARGE SCALE GENOMIC DNA]</scope>
    <source>
        <strain>Ly</strain>
    </source>
</reference>
<sequence length="114" mass="13727">MKKRNINIKSRLEIQELFKKGQFVKIEGINIFYRFTSLAISRILITFPRVFKGAVKRNRVRRVFKECFREYFTLLKDGCADFIFVVYPQKANINYHEVKTILKNMIVYVIKRKV</sequence>
<dbReference type="EC" id="3.1.26.5" evidence="1"/>
<dbReference type="EMBL" id="CP000976">
    <property type="protein sequence ID" value="ACH93384.1"/>
    <property type="molecule type" value="Genomic_DNA"/>
</dbReference>
<dbReference type="RefSeq" id="WP_012538195.1">
    <property type="nucleotide sequence ID" value="NC_011229.1"/>
</dbReference>
<dbReference type="SMR" id="B5RLZ8"/>
<dbReference type="STRING" id="412419.BDU_439"/>
<dbReference type="KEGG" id="bdu:BDU_439"/>
<dbReference type="eggNOG" id="COG0594">
    <property type="taxonomic scope" value="Bacteria"/>
</dbReference>
<dbReference type="HOGENOM" id="CLU_2116283_0_0_12"/>
<dbReference type="OrthoDB" id="350607at2"/>
<dbReference type="Proteomes" id="UP000000611">
    <property type="component" value="Chromosome"/>
</dbReference>
<dbReference type="GO" id="GO:0030677">
    <property type="term" value="C:ribonuclease P complex"/>
    <property type="evidence" value="ECO:0007669"/>
    <property type="project" value="TreeGrafter"/>
</dbReference>
<dbReference type="GO" id="GO:0042781">
    <property type="term" value="F:3'-tRNA processing endoribonuclease activity"/>
    <property type="evidence" value="ECO:0007669"/>
    <property type="project" value="TreeGrafter"/>
</dbReference>
<dbReference type="GO" id="GO:0004526">
    <property type="term" value="F:ribonuclease P activity"/>
    <property type="evidence" value="ECO:0007669"/>
    <property type="project" value="UniProtKB-UniRule"/>
</dbReference>
<dbReference type="GO" id="GO:0000049">
    <property type="term" value="F:tRNA binding"/>
    <property type="evidence" value="ECO:0007669"/>
    <property type="project" value="UniProtKB-UniRule"/>
</dbReference>
<dbReference type="GO" id="GO:0001682">
    <property type="term" value="P:tRNA 5'-leader removal"/>
    <property type="evidence" value="ECO:0007669"/>
    <property type="project" value="UniProtKB-UniRule"/>
</dbReference>
<dbReference type="Gene3D" id="3.30.230.10">
    <property type="match status" value="1"/>
</dbReference>
<dbReference type="HAMAP" id="MF_00227">
    <property type="entry name" value="RNase_P"/>
    <property type="match status" value="1"/>
</dbReference>
<dbReference type="InterPro" id="IPR020568">
    <property type="entry name" value="Ribosomal_Su5_D2-typ_SF"/>
</dbReference>
<dbReference type="InterPro" id="IPR014721">
    <property type="entry name" value="Ribsml_uS5_D2-typ_fold_subgr"/>
</dbReference>
<dbReference type="InterPro" id="IPR000100">
    <property type="entry name" value="RNase_P"/>
</dbReference>
<dbReference type="NCBIfam" id="TIGR00188">
    <property type="entry name" value="rnpA"/>
    <property type="match status" value="1"/>
</dbReference>
<dbReference type="PANTHER" id="PTHR33992">
    <property type="entry name" value="RIBONUCLEASE P PROTEIN COMPONENT"/>
    <property type="match status" value="1"/>
</dbReference>
<dbReference type="PANTHER" id="PTHR33992:SF1">
    <property type="entry name" value="RIBONUCLEASE P PROTEIN COMPONENT"/>
    <property type="match status" value="1"/>
</dbReference>
<dbReference type="Pfam" id="PF00825">
    <property type="entry name" value="Ribonuclease_P"/>
    <property type="match status" value="1"/>
</dbReference>
<dbReference type="SUPFAM" id="SSF54211">
    <property type="entry name" value="Ribosomal protein S5 domain 2-like"/>
    <property type="match status" value="1"/>
</dbReference>